<gene>
    <name evidence="1" type="primary">rpmE</name>
    <name type="ordered locus">HPG27_511</name>
</gene>
<name>RL31_HELPG</name>
<keyword id="KW-1185">Reference proteome</keyword>
<keyword id="KW-0687">Ribonucleoprotein</keyword>
<keyword id="KW-0689">Ribosomal protein</keyword>
<keyword id="KW-0694">RNA-binding</keyword>
<keyword id="KW-0699">rRNA-binding</keyword>
<organism>
    <name type="scientific">Helicobacter pylori (strain G27)</name>
    <dbReference type="NCBI Taxonomy" id="563041"/>
    <lineage>
        <taxon>Bacteria</taxon>
        <taxon>Pseudomonadati</taxon>
        <taxon>Campylobacterota</taxon>
        <taxon>Epsilonproteobacteria</taxon>
        <taxon>Campylobacterales</taxon>
        <taxon>Helicobacteraceae</taxon>
        <taxon>Helicobacter</taxon>
    </lineage>
</organism>
<evidence type="ECO:0000255" key="1">
    <source>
        <dbReference type="HAMAP-Rule" id="MF_00501"/>
    </source>
</evidence>
<evidence type="ECO:0000305" key="2"/>
<dbReference type="EMBL" id="CP001173">
    <property type="protein sequence ID" value="ACI27273.1"/>
    <property type="molecule type" value="Genomic_DNA"/>
</dbReference>
<dbReference type="RefSeq" id="WP_000715278.1">
    <property type="nucleotide sequence ID" value="NC_011333.1"/>
</dbReference>
<dbReference type="SMR" id="B5Z6S4"/>
<dbReference type="GeneID" id="93236900"/>
<dbReference type="KEGG" id="hpg:HPG27_511"/>
<dbReference type="HOGENOM" id="CLU_114306_4_0_7"/>
<dbReference type="Proteomes" id="UP000001735">
    <property type="component" value="Chromosome"/>
</dbReference>
<dbReference type="GO" id="GO:1990904">
    <property type="term" value="C:ribonucleoprotein complex"/>
    <property type="evidence" value="ECO:0007669"/>
    <property type="project" value="UniProtKB-KW"/>
</dbReference>
<dbReference type="GO" id="GO:0005840">
    <property type="term" value="C:ribosome"/>
    <property type="evidence" value="ECO:0007669"/>
    <property type="project" value="UniProtKB-KW"/>
</dbReference>
<dbReference type="GO" id="GO:0019843">
    <property type="term" value="F:rRNA binding"/>
    <property type="evidence" value="ECO:0007669"/>
    <property type="project" value="UniProtKB-KW"/>
</dbReference>
<dbReference type="GO" id="GO:0003735">
    <property type="term" value="F:structural constituent of ribosome"/>
    <property type="evidence" value="ECO:0007669"/>
    <property type="project" value="InterPro"/>
</dbReference>
<dbReference type="GO" id="GO:0006412">
    <property type="term" value="P:translation"/>
    <property type="evidence" value="ECO:0007669"/>
    <property type="project" value="UniProtKB-UniRule"/>
</dbReference>
<dbReference type="Gene3D" id="4.10.830.30">
    <property type="entry name" value="Ribosomal protein L31"/>
    <property type="match status" value="1"/>
</dbReference>
<dbReference type="HAMAP" id="MF_00501">
    <property type="entry name" value="Ribosomal_bL31_1"/>
    <property type="match status" value="1"/>
</dbReference>
<dbReference type="InterPro" id="IPR034704">
    <property type="entry name" value="Ribosomal_bL28/bL31-like_sf"/>
</dbReference>
<dbReference type="InterPro" id="IPR002150">
    <property type="entry name" value="Ribosomal_bL31"/>
</dbReference>
<dbReference type="InterPro" id="IPR027491">
    <property type="entry name" value="Ribosomal_bL31_A"/>
</dbReference>
<dbReference type="InterPro" id="IPR042105">
    <property type="entry name" value="Ribosomal_bL31_sf"/>
</dbReference>
<dbReference type="NCBIfam" id="TIGR00105">
    <property type="entry name" value="L31"/>
    <property type="match status" value="1"/>
</dbReference>
<dbReference type="NCBIfam" id="NF000612">
    <property type="entry name" value="PRK00019.1"/>
    <property type="match status" value="1"/>
</dbReference>
<dbReference type="NCBIfam" id="NF001809">
    <property type="entry name" value="PRK00528.1"/>
    <property type="match status" value="1"/>
</dbReference>
<dbReference type="PANTHER" id="PTHR33280">
    <property type="entry name" value="50S RIBOSOMAL PROTEIN L31, CHLOROPLASTIC"/>
    <property type="match status" value="1"/>
</dbReference>
<dbReference type="PANTHER" id="PTHR33280:SF6">
    <property type="entry name" value="LARGE RIBOSOMAL SUBUNIT PROTEIN BL31A"/>
    <property type="match status" value="1"/>
</dbReference>
<dbReference type="Pfam" id="PF01197">
    <property type="entry name" value="Ribosomal_L31"/>
    <property type="match status" value="1"/>
</dbReference>
<dbReference type="PRINTS" id="PR01249">
    <property type="entry name" value="RIBOSOMALL31"/>
</dbReference>
<dbReference type="SUPFAM" id="SSF143800">
    <property type="entry name" value="L28p-like"/>
    <property type="match status" value="1"/>
</dbReference>
<dbReference type="PROSITE" id="PS01143">
    <property type="entry name" value="RIBOSOMAL_L31"/>
    <property type="match status" value="1"/>
</dbReference>
<feature type="chain" id="PRO_1000126645" description="Large ribosomal subunit protein bL31">
    <location>
        <begin position="1"/>
        <end position="67"/>
    </location>
</feature>
<accession>B5Z6S4</accession>
<protein>
    <recommendedName>
        <fullName evidence="1">Large ribosomal subunit protein bL31</fullName>
    </recommendedName>
    <alternativeName>
        <fullName evidence="2">50S ribosomal protein L31</fullName>
    </alternativeName>
</protein>
<comment type="function">
    <text evidence="1">Binds the 23S rRNA.</text>
</comment>
<comment type="subunit">
    <text evidence="1">Part of the 50S ribosomal subunit.</text>
</comment>
<comment type="similarity">
    <text evidence="1">Belongs to the bacterial ribosomal protein bL31 family. Type A subfamily.</text>
</comment>
<reference key="1">
    <citation type="journal article" date="2009" name="J. Bacteriol.">
        <title>The complete genome sequence of Helicobacter pylori strain G27.</title>
        <authorList>
            <person name="Baltrus D.A."/>
            <person name="Amieva M.R."/>
            <person name="Covacci A."/>
            <person name="Lowe T.M."/>
            <person name="Merrell D.S."/>
            <person name="Ottemann K.M."/>
            <person name="Stein M."/>
            <person name="Salama N.R."/>
            <person name="Guillemin K."/>
        </authorList>
    </citation>
    <scope>NUCLEOTIDE SEQUENCE [LARGE SCALE GENOMIC DNA]</scope>
    <source>
        <strain>G27</strain>
    </source>
</reference>
<proteinExistence type="inferred from homology"/>
<sequence length="67" mass="7652">MKKGIHPEYIPCKVTCVTSGKEIEVLSTKPEMRIDISSFCHPFYTGSDKIADTAGRVEKFKQRYNLK</sequence>